<dbReference type="EMBL" id="AE000516">
    <property type="protein sequence ID" value="AAK45441.1"/>
    <property type="status" value="ALT_INIT"/>
    <property type="molecule type" value="Genomic_DNA"/>
</dbReference>
<dbReference type="PIR" id="E70554">
    <property type="entry name" value="E70554"/>
</dbReference>
<dbReference type="RefSeq" id="WP_023641791.1">
    <property type="nucleotide sequence ID" value="NZ_KK341227.1"/>
</dbReference>
<dbReference type="KEGG" id="mtc:MT1183"/>
<dbReference type="HOGENOM" id="CLU_022065_0_0_11"/>
<dbReference type="Proteomes" id="UP000001020">
    <property type="component" value="Chromosome"/>
</dbReference>
<dbReference type="GO" id="GO:0004519">
    <property type="term" value="F:endonuclease activity"/>
    <property type="evidence" value="ECO:0007669"/>
    <property type="project" value="InterPro"/>
</dbReference>
<dbReference type="GO" id="GO:0003676">
    <property type="term" value="F:nucleic acid binding"/>
    <property type="evidence" value="ECO:0007669"/>
    <property type="project" value="InterPro"/>
</dbReference>
<dbReference type="GO" id="GO:0008270">
    <property type="term" value="F:zinc ion binding"/>
    <property type="evidence" value="ECO:0007669"/>
    <property type="project" value="InterPro"/>
</dbReference>
<dbReference type="CDD" id="cd00085">
    <property type="entry name" value="HNHc"/>
    <property type="match status" value="1"/>
</dbReference>
<dbReference type="InterPro" id="IPR003870">
    <property type="entry name" value="DUF222"/>
</dbReference>
<dbReference type="InterPro" id="IPR002711">
    <property type="entry name" value="HNH"/>
</dbReference>
<dbReference type="InterPro" id="IPR003615">
    <property type="entry name" value="HNH_nuc"/>
</dbReference>
<dbReference type="Pfam" id="PF02720">
    <property type="entry name" value="DUF222"/>
    <property type="match status" value="1"/>
</dbReference>
<dbReference type="Pfam" id="PF01844">
    <property type="entry name" value="HNH"/>
    <property type="match status" value="1"/>
</dbReference>
<dbReference type="SMART" id="SM00507">
    <property type="entry name" value="HNHc"/>
    <property type="match status" value="1"/>
</dbReference>
<proteinExistence type="inferred from homology"/>
<feature type="chain" id="PRO_0000427363" description="Uncharacterized protein MT1183">
    <location>
        <begin position="1"/>
        <end position="454"/>
    </location>
</feature>
<feature type="domain" description="HNH">
    <location>
        <begin position="364"/>
        <end position="405"/>
    </location>
</feature>
<gene>
    <name type="ordered locus">MT1183</name>
</gene>
<sequence>MRSDTREEISAALDAYHASLSRVLDLKCDALTTPELLACLQRLEVERRRQGAAEHALINQLAGQACEEELGGTLRTALANRLHITPGEASRRIAEAEDLGERRALTGEPLPAQLTATAAAQREGKIGREHIKEIQAFFKELSAAVDLGIREAAEAQLAELATSRRPDHLHGLATQLMDWLHPDGNFSDQERARKRGITMGKQEFDGMSRISGLLTPELRATIEAVLAKLAAPGACNPDDQTPLVADTPDADAVRRDTRSQAQRNHDAFLAALRGLLASGELGQHKGLPVTIVVSTTLKELEAATGKGVTGGGSRVPMSDLIRMASHANHYLALFDGAKPLALYHTKRLASPAQRIMLYAKDRGCSRPGCDAPAYHSEVHHVTPWTTTHRTDINDLTLACGPDNRLVEKGWKTRKNAHGDTEWLPPPHLDHGQPRINRYHHPAKILCEQDDDEPH</sequence>
<protein>
    <recommendedName>
        <fullName>Uncharacterized protein MT1183</fullName>
    </recommendedName>
</protein>
<organism>
    <name type="scientific">Mycobacterium tuberculosis (strain CDC 1551 / Oshkosh)</name>
    <dbReference type="NCBI Taxonomy" id="83331"/>
    <lineage>
        <taxon>Bacteria</taxon>
        <taxon>Bacillati</taxon>
        <taxon>Actinomycetota</taxon>
        <taxon>Actinomycetes</taxon>
        <taxon>Mycobacteriales</taxon>
        <taxon>Mycobacteriaceae</taxon>
        <taxon>Mycobacterium</taxon>
        <taxon>Mycobacterium tuberculosis complex</taxon>
    </lineage>
</organism>
<comment type="similarity">
    <text evidence="1">Belongs to the Rv1128c/1148c/1588c/1702c/1945/3466 family.</text>
</comment>
<comment type="sequence caution" evidence="1">
    <conflict type="erroneous initiation">
        <sequence resource="EMBL-CDS" id="AAK45441"/>
    </conflict>
    <text>Extended N-terminus.</text>
</comment>
<keyword id="KW-1185">Reference proteome</keyword>
<reference key="1">
    <citation type="journal article" date="2002" name="J. Bacteriol.">
        <title>Whole-genome comparison of Mycobacterium tuberculosis clinical and laboratory strains.</title>
        <authorList>
            <person name="Fleischmann R.D."/>
            <person name="Alland D."/>
            <person name="Eisen J.A."/>
            <person name="Carpenter L."/>
            <person name="White O."/>
            <person name="Peterson J.D."/>
            <person name="DeBoy R.T."/>
            <person name="Dodson R.J."/>
            <person name="Gwinn M.L."/>
            <person name="Haft D.H."/>
            <person name="Hickey E.K."/>
            <person name="Kolonay J.F."/>
            <person name="Nelson W.C."/>
            <person name="Umayam L.A."/>
            <person name="Ermolaeva M.D."/>
            <person name="Salzberg S.L."/>
            <person name="Delcher A."/>
            <person name="Utterback T.R."/>
            <person name="Weidman J.F."/>
            <person name="Khouri H.M."/>
            <person name="Gill J."/>
            <person name="Mikula A."/>
            <person name="Bishai W."/>
            <person name="Jacobs W.R. Jr."/>
            <person name="Venter J.C."/>
            <person name="Fraser C.M."/>
        </authorList>
    </citation>
    <scope>NUCLEOTIDE SEQUENCE [LARGE SCALE GENOMIC DNA]</scope>
    <source>
        <strain>CDC 1551 / Oshkosh</strain>
    </source>
</reference>
<evidence type="ECO:0000305" key="1"/>
<name>Y1148_MYCTO</name>
<accession>P9WM54</accession>
<accession>L0T8L3</accession>
<accession>O06548</accession>
<accession>P0A5D9</accession>